<gene>
    <name evidence="1" type="primary">purR</name>
    <name type="ordered locus">HS_1032</name>
</gene>
<reference key="1">
    <citation type="journal article" date="2007" name="J. Bacteriol.">
        <title>Complete genome sequence of Haemophilus somnus (Histophilus somni) strain 129Pt and comparison to Haemophilus ducreyi 35000HP and Haemophilus influenzae Rd.</title>
        <authorList>
            <person name="Challacombe J.F."/>
            <person name="Duncan A.J."/>
            <person name="Brettin T.S."/>
            <person name="Bruce D."/>
            <person name="Chertkov O."/>
            <person name="Detter J.C."/>
            <person name="Han C.S."/>
            <person name="Misra M."/>
            <person name="Richardson P."/>
            <person name="Tapia R."/>
            <person name="Thayer N."/>
            <person name="Xie G."/>
            <person name="Inzana T.J."/>
        </authorList>
    </citation>
    <scope>NUCLEOTIDE SEQUENCE [LARGE SCALE GENOMIC DNA]</scope>
    <source>
        <strain>129Pt</strain>
    </source>
</reference>
<feature type="chain" id="PRO_0000279661" description="HTH-type transcriptional repressor PurR">
    <location>
        <begin position="1"/>
        <end position="333"/>
    </location>
</feature>
<feature type="domain" description="HTH lacI-type" evidence="1">
    <location>
        <begin position="2"/>
        <end position="56"/>
    </location>
</feature>
<feature type="DNA-binding region" description="H-T-H motif" evidence="1">
    <location>
        <begin position="4"/>
        <end position="23"/>
    </location>
</feature>
<feature type="DNA-binding region" evidence="1">
    <location>
        <begin position="48"/>
        <end position="56"/>
    </location>
</feature>
<feature type="binding site" evidence="1">
    <location>
        <position position="73"/>
    </location>
    <ligand>
        <name>hypoxanthine</name>
        <dbReference type="ChEBI" id="CHEBI:17368"/>
    </ligand>
</feature>
<feature type="binding site" evidence="1">
    <location>
        <position position="189"/>
    </location>
    <ligand>
        <name>hypoxanthine</name>
        <dbReference type="ChEBI" id="CHEBI:17368"/>
    </ligand>
</feature>
<feature type="binding site" evidence="1">
    <location>
        <position position="191"/>
    </location>
    <ligand>
        <name>hypoxanthine</name>
        <dbReference type="ChEBI" id="CHEBI:17368"/>
    </ligand>
</feature>
<feature type="binding site" evidence="1">
    <location>
        <position position="220"/>
    </location>
    <ligand>
        <name>hypoxanthine</name>
        <dbReference type="ChEBI" id="CHEBI:17368"/>
    </ligand>
</feature>
<feature type="binding site" evidence="1">
    <location>
        <position position="274"/>
    </location>
    <ligand>
        <name>hypoxanthine</name>
        <dbReference type="ChEBI" id="CHEBI:17368"/>
    </ligand>
</feature>
<evidence type="ECO:0000255" key="1">
    <source>
        <dbReference type="HAMAP-Rule" id="MF_01277"/>
    </source>
</evidence>
<organism>
    <name type="scientific">Histophilus somni (strain 129Pt)</name>
    <name type="common">Haemophilus somnus</name>
    <dbReference type="NCBI Taxonomy" id="205914"/>
    <lineage>
        <taxon>Bacteria</taxon>
        <taxon>Pseudomonadati</taxon>
        <taxon>Pseudomonadota</taxon>
        <taxon>Gammaproteobacteria</taxon>
        <taxon>Pasteurellales</taxon>
        <taxon>Pasteurellaceae</taxon>
        <taxon>Histophilus</taxon>
    </lineage>
</organism>
<sequence length="333" mass="37247">MATIKDVAKMAGVSTTTVSHVINKTRFVAKETEQQVLQAIKNLNYSPSAVARSLKVNTTKSIGMIVTTCETPYFAEIIHSVEELCYRQGYSLFLCNTQNNPEKIKNHLDMLAKKRVDGLLVMCAEYTQNSLNLLATFEDLPMVVMDWGPFNENTDLIQDNSFSGGYIATKYLIDNGHKDIAIISGELKKTTAVMRYQGFEKAMQEANLAINPDWIMEGFFEPEDGYECMNKILVQDKLPTAVFCCNDVMALGAISAIGEKGLKVPDDISVIGYDNIHASRFFSPPLTTIHQSKSRLGVQAINLLFKRISEKGKEHEIIEIYPELVIRKSVKTL</sequence>
<accession>Q0I4B4</accession>
<comment type="function">
    <text evidence="1">Is the main repressor of the genes involved in the de novo synthesis of purine nucleotides, regulating purB, purC, purEK, purF, purHD, purL, purMN and guaBA expression. PurR is allosterically activated to bind its cognate DNA by binding the purine corepressors, hypoxanthine or guanine, thereby effecting transcription repression.</text>
</comment>
<comment type="pathway">
    <text>Purine metabolism; purine nucleotide biosynthesis [regulation].</text>
</comment>
<comment type="subunit">
    <text evidence="1">Homodimer.</text>
</comment>
<comment type="domain">
    <text evidence="1">Consists of two structural and functional domains: an N-terminal DNA-binding domain, approximately the first 60 residues, and a larger C-terminal domain, approximately 280 residues, which imparts the function of corepressor binding and oligomerization.</text>
</comment>
<keyword id="KW-0238">DNA-binding</keyword>
<keyword id="KW-0658">Purine biosynthesis</keyword>
<keyword id="KW-0678">Repressor</keyword>
<keyword id="KW-0804">Transcription</keyword>
<keyword id="KW-0805">Transcription regulation</keyword>
<name>PURR_HISS1</name>
<protein>
    <recommendedName>
        <fullName evidence="1">HTH-type transcriptional repressor PurR</fullName>
    </recommendedName>
    <alternativeName>
        <fullName evidence="1">Pur regulon repressor</fullName>
    </alternativeName>
    <alternativeName>
        <fullName evidence="1">Purine nucleotide synthesis repressor</fullName>
    </alternativeName>
</protein>
<dbReference type="EMBL" id="CP000436">
    <property type="protein sequence ID" value="ABI25307.1"/>
    <property type="molecule type" value="Genomic_DNA"/>
</dbReference>
<dbReference type="SMR" id="Q0I4B4"/>
<dbReference type="KEGG" id="hso:HS_1032"/>
<dbReference type="eggNOG" id="COG1609">
    <property type="taxonomic scope" value="Bacteria"/>
</dbReference>
<dbReference type="HOGENOM" id="CLU_037628_6_2_6"/>
<dbReference type="UniPathway" id="UPA00488"/>
<dbReference type="GO" id="GO:0003700">
    <property type="term" value="F:DNA-binding transcription factor activity"/>
    <property type="evidence" value="ECO:0007669"/>
    <property type="project" value="TreeGrafter"/>
</dbReference>
<dbReference type="GO" id="GO:0000976">
    <property type="term" value="F:transcription cis-regulatory region binding"/>
    <property type="evidence" value="ECO:0007669"/>
    <property type="project" value="TreeGrafter"/>
</dbReference>
<dbReference type="GO" id="GO:0045892">
    <property type="term" value="P:negative regulation of DNA-templated transcription"/>
    <property type="evidence" value="ECO:0007669"/>
    <property type="project" value="UniProtKB-UniRule"/>
</dbReference>
<dbReference type="GO" id="GO:0006164">
    <property type="term" value="P:purine nucleotide biosynthetic process"/>
    <property type="evidence" value="ECO:0007669"/>
    <property type="project" value="UniProtKB-UniPathway"/>
</dbReference>
<dbReference type="CDD" id="cd01392">
    <property type="entry name" value="HTH_LacI"/>
    <property type="match status" value="1"/>
</dbReference>
<dbReference type="CDD" id="cd06275">
    <property type="entry name" value="PBP1_PurR"/>
    <property type="match status" value="1"/>
</dbReference>
<dbReference type="FunFam" id="1.10.260.40:FF:000002">
    <property type="entry name" value="HTH-type transcriptional repressor PurR"/>
    <property type="match status" value="1"/>
</dbReference>
<dbReference type="Gene3D" id="3.40.50.2300">
    <property type="match status" value="2"/>
</dbReference>
<dbReference type="Gene3D" id="1.10.260.40">
    <property type="entry name" value="lambda repressor-like DNA-binding domains"/>
    <property type="match status" value="1"/>
</dbReference>
<dbReference type="HAMAP" id="MF_01277">
    <property type="entry name" value="HTH_type_PurR"/>
    <property type="match status" value="1"/>
</dbReference>
<dbReference type="InterPro" id="IPR000843">
    <property type="entry name" value="HTH_LacI"/>
</dbReference>
<dbReference type="InterPro" id="IPR046335">
    <property type="entry name" value="LacI/GalR-like_sensor"/>
</dbReference>
<dbReference type="InterPro" id="IPR010982">
    <property type="entry name" value="Lambda_DNA-bd_dom_sf"/>
</dbReference>
<dbReference type="InterPro" id="IPR028082">
    <property type="entry name" value="Peripla_BP_I"/>
</dbReference>
<dbReference type="InterPro" id="IPR023588">
    <property type="entry name" value="Tscrpt_reg_HTH_PurR"/>
</dbReference>
<dbReference type="NCBIfam" id="NF007979">
    <property type="entry name" value="PRK10703.1"/>
    <property type="match status" value="1"/>
</dbReference>
<dbReference type="PANTHER" id="PTHR30146:SF148">
    <property type="entry name" value="HTH-TYPE TRANSCRIPTIONAL REPRESSOR PURR-RELATED"/>
    <property type="match status" value="1"/>
</dbReference>
<dbReference type="PANTHER" id="PTHR30146">
    <property type="entry name" value="LACI-RELATED TRANSCRIPTIONAL REPRESSOR"/>
    <property type="match status" value="1"/>
</dbReference>
<dbReference type="Pfam" id="PF00356">
    <property type="entry name" value="LacI"/>
    <property type="match status" value="1"/>
</dbReference>
<dbReference type="Pfam" id="PF13377">
    <property type="entry name" value="Peripla_BP_3"/>
    <property type="match status" value="1"/>
</dbReference>
<dbReference type="PRINTS" id="PR00036">
    <property type="entry name" value="HTHLACI"/>
</dbReference>
<dbReference type="SMART" id="SM00354">
    <property type="entry name" value="HTH_LACI"/>
    <property type="match status" value="1"/>
</dbReference>
<dbReference type="SUPFAM" id="SSF47413">
    <property type="entry name" value="lambda repressor-like DNA-binding domains"/>
    <property type="match status" value="1"/>
</dbReference>
<dbReference type="SUPFAM" id="SSF53822">
    <property type="entry name" value="Periplasmic binding protein-like I"/>
    <property type="match status" value="1"/>
</dbReference>
<dbReference type="PROSITE" id="PS00356">
    <property type="entry name" value="HTH_LACI_1"/>
    <property type="match status" value="1"/>
</dbReference>
<dbReference type="PROSITE" id="PS50932">
    <property type="entry name" value="HTH_LACI_2"/>
    <property type="match status" value="1"/>
</dbReference>
<proteinExistence type="inferred from homology"/>